<feature type="chain" id="PRO_0000108383" description="Cytochrome c-550">
    <location>
        <begin position="1"/>
        <end position="111"/>
    </location>
</feature>
<feature type="binding site" description="covalent">
    <location>
        <position position="13"/>
    </location>
    <ligand>
        <name>heme c</name>
        <dbReference type="ChEBI" id="CHEBI:61717"/>
    </ligand>
</feature>
<feature type="binding site" description="covalent">
    <location>
        <position position="16"/>
    </location>
    <ligand>
        <name>heme c</name>
        <dbReference type="ChEBI" id="CHEBI:61717"/>
    </ligand>
</feature>
<feature type="binding site" description="axial binding residue">
    <location>
        <position position="17"/>
    </location>
    <ligand>
        <name>heme c</name>
        <dbReference type="ChEBI" id="CHEBI:61717"/>
    </ligand>
    <ligandPart>
        <name>Fe</name>
        <dbReference type="ChEBI" id="CHEBI:18248"/>
    </ligandPart>
</feature>
<feature type="binding site" description="axial binding residue">
    <location>
        <position position="90"/>
    </location>
    <ligand>
        <name>heme c</name>
        <dbReference type="ChEBI" id="CHEBI:61717"/>
    </ligand>
    <ligandPart>
        <name>Fe</name>
        <dbReference type="ChEBI" id="CHEBI:18248"/>
    </ligandPart>
</feature>
<comment type="PTM">
    <text>Binds 1 heme c group covalently per subunit.</text>
</comment>
<name>CY550_NOVIT</name>
<sequence length="111" mass="11595">GDAAKGANVAKSCGTCHSFEQGGAKKQGPNLFGITTRGPGKAEGFNYSPSYKAAAAKGFAWDAATLQDYITDPTAFLSNKTGDAAARDKMTFKLAKPDERADVIAYLATLK</sequence>
<keyword id="KW-0903">Direct protein sequencing</keyword>
<keyword id="KW-0249">Electron transport</keyword>
<keyword id="KW-0349">Heme</keyword>
<keyword id="KW-0408">Iron</keyword>
<keyword id="KW-0479">Metal-binding</keyword>
<keyword id="KW-0813">Transport</keyword>
<protein>
    <recommendedName>
        <fullName>Cytochrome c-550</fullName>
    </recommendedName>
    <alternativeName>
        <fullName>Cytochrome c550</fullName>
    </alternativeName>
</protein>
<dbReference type="PIR" id="S00034">
    <property type="entry name" value="S00034"/>
</dbReference>
<dbReference type="SMR" id="P12832"/>
<dbReference type="GO" id="GO:0009055">
    <property type="term" value="F:electron transfer activity"/>
    <property type="evidence" value="ECO:0007669"/>
    <property type="project" value="InterPro"/>
</dbReference>
<dbReference type="GO" id="GO:0020037">
    <property type="term" value="F:heme binding"/>
    <property type="evidence" value="ECO:0007669"/>
    <property type="project" value="InterPro"/>
</dbReference>
<dbReference type="GO" id="GO:0046872">
    <property type="term" value="F:metal ion binding"/>
    <property type="evidence" value="ECO:0007669"/>
    <property type="project" value="UniProtKB-KW"/>
</dbReference>
<dbReference type="Gene3D" id="1.10.760.10">
    <property type="entry name" value="Cytochrome c-like domain"/>
    <property type="match status" value="1"/>
</dbReference>
<dbReference type="InterPro" id="IPR009056">
    <property type="entry name" value="Cyt_c-like_dom"/>
</dbReference>
<dbReference type="InterPro" id="IPR036909">
    <property type="entry name" value="Cyt_c-like_dom_sf"/>
</dbReference>
<dbReference type="InterPro" id="IPR002327">
    <property type="entry name" value="Cyt_c_1A/1B"/>
</dbReference>
<dbReference type="PANTHER" id="PTHR11961">
    <property type="entry name" value="CYTOCHROME C"/>
    <property type="match status" value="1"/>
</dbReference>
<dbReference type="Pfam" id="PF00034">
    <property type="entry name" value="Cytochrom_C"/>
    <property type="match status" value="1"/>
</dbReference>
<dbReference type="PRINTS" id="PR00604">
    <property type="entry name" value="CYTCHRMECIAB"/>
</dbReference>
<dbReference type="SUPFAM" id="SSF46626">
    <property type="entry name" value="Cytochrome c"/>
    <property type="match status" value="1"/>
</dbReference>
<dbReference type="PROSITE" id="PS51007">
    <property type="entry name" value="CYTC"/>
    <property type="match status" value="1"/>
</dbReference>
<proteinExistence type="evidence at protein level"/>
<reference key="1">
    <citation type="journal article" date="1987" name="Eur. J. Biochem.">
        <title>The soluble c-type cytochromes from the bacterium Aquaspirillum itersonii. The complete amino acid sequence of the cytochrome c-550.</title>
        <authorList>
            <person name="Woolley K.J."/>
        </authorList>
    </citation>
    <scope>PROTEIN SEQUENCE</scope>
</reference>
<accession>P12832</accession>
<organism>
    <name type="scientific">Novispirillum itersonii</name>
    <name type="common">Aquaspirillum itersonii</name>
    <dbReference type="NCBI Taxonomy" id="189"/>
    <lineage>
        <taxon>Bacteria</taxon>
        <taxon>Pseudomonadati</taxon>
        <taxon>Pseudomonadota</taxon>
        <taxon>Alphaproteobacteria</taxon>
        <taxon>Rhodospirillales</taxon>
        <taxon>Novispirillaceae</taxon>
        <taxon>Novispirillum</taxon>
    </lineage>
</organism>